<dbReference type="EMBL" id="DQ464258">
    <property type="protein sequence ID" value="ABG26987.1"/>
    <property type="molecule type" value="mRNA"/>
</dbReference>
<dbReference type="SMR" id="B0VXV2"/>
<dbReference type="GO" id="GO:0005576">
    <property type="term" value="C:extracellular region"/>
    <property type="evidence" value="ECO:0007669"/>
    <property type="project" value="UniProtKB-SubCell"/>
</dbReference>
<dbReference type="GO" id="GO:0090729">
    <property type="term" value="F:toxin activity"/>
    <property type="evidence" value="ECO:0007669"/>
    <property type="project" value="UniProtKB-KW"/>
</dbReference>
<dbReference type="FunFam" id="3.10.100.10:FF:000087">
    <property type="entry name" value="Snaclec rhodocetin subunit delta"/>
    <property type="match status" value="1"/>
</dbReference>
<dbReference type="Gene3D" id="3.10.100.10">
    <property type="entry name" value="Mannose-Binding Protein A, subunit A"/>
    <property type="match status" value="1"/>
</dbReference>
<dbReference type="InterPro" id="IPR001304">
    <property type="entry name" value="C-type_lectin-like"/>
</dbReference>
<dbReference type="InterPro" id="IPR016186">
    <property type="entry name" value="C-type_lectin-like/link_sf"/>
</dbReference>
<dbReference type="InterPro" id="IPR050111">
    <property type="entry name" value="C-type_lectin/snaclec_domain"/>
</dbReference>
<dbReference type="InterPro" id="IPR018378">
    <property type="entry name" value="C-type_lectin_CS"/>
</dbReference>
<dbReference type="InterPro" id="IPR016187">
    <property type="entry name" value="CTDL_fold"/>
</dbReference>
<dbReference type="PANTHER" id="PTHR22803">
    <property type="entry name" value="MANNOSE, PHOSPHOLIPASE, LECTIN RECEPTOR RELATED"/>
    <property type="match status" value="1"/>
</dbReference>
<dbReference type="Pfam" id="PF00059">
    <property type="entry name" value="Lectin_C"/>
    <property type="match status" value="1"/>
</dbReference>
<dbReference type="PRINTS" id="PR01504">
    <property type="entry name" value="PNCREATITSAP"/>
</dbReference>
<dbReference type="SMART" id="SM00034">
    <property type="entry name" value="CLECT"/>
    <property type="match status" value="1"/>
</dbReference>
<dbReference type="SUPFAM" id="SSF56436">
    <property type="entry name" value="C-type lectin-like"/>
    <property type="match status" value="1"/>
</dbReference>
<dbReference type="PROSITE" id="PS00615">
    <property type="entry name" value="C_TYPE_LECTIN_1"/>
    <property type="match status" value="1"/>
</dbReference>
<dbReference type="PROSITE" id="PS50041">
    <property type="entry name" value="C_TYPE_LECTIN_2"/>
    <property type="match status" value="1"/>
</dbReference>
<accession>B0VXV2</accession>
<proteinExistence type="evidence at transcript level"/>
<organism>
    <name type="scientific">Sistrurus catenatus edwardsii</name>
    <name type="common">Desert massasauga</name>
    <name type="synonym">Crotalophorus edwardsii</name>
    <dbReference type="NCBI Taxonomy" id="8762"/>
    <lineage>
        <taxon>Eukaryota</taxon>
        <taxon>Metazoa</taxon>
        <taxon>Chordata</taxon>
        <taxon>Craniata</taxon>
        <taxon>Vertebrata</taxon>
        <taxon>Euteleostomi</taxon>
        <taxon>Lepidosauria</taxon>
        <taxon>Squamata</taxon>
        <taxon>Bifurcata</taxon>
        <taxon>Unidentata</taxon>
        <taxon>Episquamata</taxon>
        <taxon>Toxicofera</taxon>
        <taxon>Serpentes</taxon>
        <taxon>Colubroidea</taxon>
        <taxon>Viperidae</taxon>
        <taxon>Crotalinae</taxon>
        <taxon>Sistrurus</taxon>
    </lineage>
</organism>
<comment type="function">
    <text evidence="1">Interferes with one step of hemostasis (modulation of platelet aggregation, or coagulation cascade, for example).</text>
</comment>
<comment type="subunit">
    <text evidence="1">Heterodimer; disulfide-linked.</text>
</comment>
<comment type="subcellular location">
    <subcellularLocation>
        <location evidence="1">Secreted</location>
    </subcellularLocation>
</comment>
<comment type="tissue specificity">
    <text>Expressed by the venom gland.</text>
</comment>
<comment type="miscellaneous">
    <text>Shows greater sequence similarity to the alpha than beta subunits compared to other heterodimer snaclecs.</text>
</comment>
<comment type="similarity">
    <text evidence="4">Belongs to the snaclec family.</text>
</comment>
<sequence length="151" mass="16939">MGRLVFVSFSLLVVFLSLSGTAADCPSGWSSYEGHCYKPFNEPKNWDDAERFCLEQAKGGHLVSIESSEEADFVAQLVANNVRRGISYIWIGLRVQGEEKQCSTKWSDGSSVNYENWIEALSKTCLGLEQDTNHKWVNIYCGEINPFVCKA</sequence>
<keyword id="KW-1015">Disulfide bond</keyword>
<keyword id="KW-1199">Hemostasis impairing toxin</keyword>
<keyword id="KW-0964">Secreted</keyword>
<keyword id="KW-0732">Signal</keyword>
<keyword id="KW-0800">Toxin</keyword>
<name>SL3_SISCA</name>
<evidence type="ECO:0000250" key="1"/>
<evidence type="ECO:0000255" key="2"/>
<evidence type="ECO:0000255" key="3">
    <source>
        <dbReference type="PROSITE-ProRule" id="PRU00040"/>
    </source>
</evidence>
<evidence type="ECO:0000305" key="4"/>
<reference key="1">
    <citation type="journal article" date="2007" name="BMC Mol. Biol.">
        <title>The venom gland transcriptome of the Desert Massasauga rattlesnake (Sistrurus catenatus edwardsii): towards an understanding of venom composition among advanced snakes (Superfamily Colubroidea).</title>
        <authorList>
            <person name="Pahari S."/>
            <person name="Mackessy S.P."/>
            <person name="Kini R.M."/>
        </authorList>
    </citation>
    <scope>NUCLEOTIDE SEQUENCE [LARGE SCALE MRNA]</scope>
    <source>
        <tissue>Venom gland</tissue>
    </source>
</reference>
<feature type="signal peptide" evidence="2">
    <location>
        <begin position="1"/>
        <end position="23"/>
    </location>
</feature>
<feature type="chain" id="PRO_0000355291" description="Snaclec 3">
    <location>
        <begin position="24"/>
        <end position="151"/>
    </location>
</feature>
<feature type="domain" description="C-type lectin" evidence="3">
    <location>
        <begin position="32"/>
        <end position="150"/>
    </location>
</feature>
<feature type="disulfide bond" evidence="3">
    <location>
        <begin position="25"/>
        <end position="36"/>
    </location>
</feature>
<feature type="disulfide bond" evidence="3">
    <location>
        <begin position="53"/>
        <end position="149"/>
    </location>
</feature>
<feature type="disulfide bond" description="Interchain" evidence="3">
    <location>
        <position position="102"/>
    </location>
</feature>
<feature type="disulfide bond" evidence="3">
    <location>
        <begin position="125"/>
        <end position="141"/>
    </location>
</feature>
<protein>
    <recommendedName>
        <fullName>Snaclec 3</fullName>
    </recommendedName>
    <alternativeName>
        <fullName>C-type lectin isoform 3</fullName>
    </alternativeName>
</protein>